<protein>
    <recommendedName>
        <fullName evidence="1">DNA repair protein RecO</fullName>
    </recommendedName>
    <alternativeName>
        <fullName evidence="1">Recombination protein O</fullName>
    </alternativeName>
</protein>
<keyword id="KW-0227">DNA damage</keyword>
<keyword id="KW-0233">DNA recombination</keyword>
<keyword id="KW-0234">DNA repair</keyword>
<keyword id="KW-1185">Reference proteome</keyword>
<evidence type="ECO:0000255" key="1">
    <source>
        <dbReference type="HAMAP-Rule" id="MF_00201"/>
    </source>
</evidence>
<evidence type="ECO:0000305" key="2"/>
<reference key="1">
    <citation type="journal article" date="2007" name="Proc. Natl. Acad. Sci. U.S.A.">
        <title>The genome of Syntrophus aciditrophicus: life at the thermodynamic limit of microbial growth.</title>
        <authorList>
            <person name="McInerney M.J."/>
            <person name="Rohlin L."/>
            <person name="Mouttaki H."/>
            <person name="Kim U."/>
            <person name="Krupp R.S."/>
            <person name="Rios-Hernandez L."/>
            <person name="Sieber J."/>
            <person name="Struchtemeyer C.G."/>
            <person name="Bhattacharyya A."/>
            <person name="Campbell J.W."/>
            <person name="Gunsalus R.P."/>
        </authorList>
    </citation>
    <scope>NUCLEOTIDE SEQUENCE [LARGE SCALE GENOMIC DNA]</scope>
    <source>
        <strain>SB</strain>
    </source>
</reference>
<feature type="chain" id="PRO_0000264854" description="DNA repair protein RecO">
    <location>
        <begin position="1"/>
        <end position="259"/>
    </location>
</feature>
<sequence length="259" mass="29597">MNTRATHKTEGFVLKTLSYSDSDLIVTFYTRNFGKLTAIARGARKSRKRFVNVLEPFCCSSLLFSRKQRDQLAWLESCQVINEFPEIRKSLDRTLLASYLIDLVDHFSIEEKPGRELFELLRSFLLLIEEGDTSERLLRFFEIRHLKLTGYAPALDCCMICKAPLNPQQRYVFNIAQGGLHCRSCYTTPAAPDVLPISVGTIKTLLLGREIETEKMKRILFSGQTARESKSLLSLFIGHILGKELKSLKVLDEIQRMGL</sequence>
<organism>
    <name type="scientific">Syntrophus aciditrophicus (strain SB)</name>
    <dbReference type="NCBI Taxonomy" id="56780"/>
    <lineage>
        <taxon>Bacteria</taxon>
        <taxon>Pseudomonadati</taxon>
        <taxon>Thermodesulfobacteriota</taxon>
        <taxon>Syntrophia</taxon>
        <taxon>Syntrophales</taxon>
        <taxon>Syntrophaceae</taxon>
        <taxon>Syntrophus</taxon>
    </lineage>
</organism>
<name>RECO_SYNAS</name>
<comment type="function">
    <text evidence="1">Involved in DNA repair and RecF pathway recombination.</text>
</comment>
<comment type="similarity">
    <text evidence="1">Belongs to the RecO family.</text>
</comment>
<comment type="sequence caution" evidence="2">
    <conflict type="erroneous initiation">
        <sequence resource="EMBL-CDS" id="ABC78093"/>
    </conflict>
</comment>
<dbReference type="EMBL" id="CP000252">
    <property type="protein sequence ID" value="ABC78093.1"/>
    <property type="status" value="ALT_INIT"/>
    <property type="molecule type" value="Genomic_DNA"/>
</dbReference>
<dbReference type="RefSeq" id="WP_041585003.1">
    <property type="nucleotide sequence ID" value="NC_007759.1"/>
</dbReference>
<dbReference type="SMR" id="Q2LVI1"/>
<dbReference type="FunCoup" id="Q2LVI1">
    <property type="interactions" value="47"/>
</dbReference>
<dbReference type="STRING" id="56780.SYN_01535"/>
<dbReference type="KEGG" id="sat:SYN_01535"/>
<dbReference type="eggNOG" id="COG1381">
    <property type="taxonomic scope" value="Bacteria"/>
</dbReference>
<dbReference type="HOGENOM" id="CLU_066632_2_1_7"/>
<dbReference type="InParanoid" id="Q2LVI1"/>
<dbReference type="OrthoDB" id="9780797at2"/>
<dbReference type="Proteomes" id="UP000001933">
    <property type="component" value="Chromosome"/>
</dbReference>
<dbReference type="GO" id="GO:0043590">
    <property type="term" value="C:bacterial nucleoid"/>
    <property type="evidence" value="ECO:0007669"/>
    <property type="project" value="TreeGrafter"/>
</dbReference>
<dbReference type="GO" id="GO:0006310">
    <property type="term" value="P:DNA recombination"/>
    <property type="evidence" value="ECO:0007669"/>
    <property type="project" value="UniProtKB-UniRule"/>
</dbReference>
<dbReference type="GO" id="GO:0006302">
    <property type="term" value="P:double-strand break repair"/>
    <property type="evidence" value="ECO:0007669"/>
    <property type="project" value="TreeGrafter"/>
</dbReference>
<dbReference type="Gene3D" id="2.40.50.140">
    <property type="entry name" value="Nucleic acid-binding proteins"/>
    <property type="match status" value="1"/>
</dbReference>
<dbReference type="Gene3D" id="1.20.1440.120">
    <property type="entry name" value="Recombination protein O, C-terminal domain"/>
    <property type="match status" value="1"/>
</dbReference>
<dbReference type="HAMAP" id="MF_00201">
    <property type="entry name" value="RecO"/>
    <property type="match status" value="1"/>
</dbReference>
<dbReference type="InterPro" id="IPR037278">
    <property type="entry name" value="ARFGAP/RecO"/>
</dbReference>
<dbReference type="InterPro" id="IPR022572">
    <property type="entry name" value="DNA_rep/recomb_RecO_N"/>
</dbReference>
<dbReference type="InterPro" id="IPR012340">
    <property type="entry name" value="NA-bd_OB-fold"/>
</dbReference>
<dbReference type="InterPro" id="IPR003717">
    <property type="entry name" value="RecO"/>
</dbReference>
<dbReference type="InterPro" id="IPR042242">
    <property type="entry name" value="RecO_C"/>
</dbReference>
<dbReference type="NCBIfam" id="TIGR00613">
    <property type="entry name" value="reco"/>
    <property type="match status" value="1"/>
</dbReference>
<dbReference type="PANTHER" id="PTHR33991">
    <property type="entry name" value="DNA REPAIR PROTEIN RECO"/>
    <property type="match status" value="1"/>
</dbReference>
<dbReference type="PANTHER" id="PTHR33991:SF1">
    <property type="entry name" value="DNA REPAIR PROTEIN RECO"/>
    <property type="match status" value="1"/>
</dbReference>
<dbReference type="Pfam" id="PF02565">
    <property type="entry name" value="RecO_C"/>
    <property type="match status" value="1"/>
</dbReference>
<dbReference type="Pfam" id="PF11967">
    <property type="entry name" value="RecO_N"/>
    <property type="match status" value="1"/>
</dbReference>
<dbReference type="SUPFAM" id="SSF57863">
    <property type="entry name" value="ArfGap/RecO-like zinc finger"/>
    <property type="match status" value="1"/>
</dbReference>
<dbReference type="SUPFAM" id="SSF50249">
    <property type="entry name" value="Nucleic acid-binding proteins"/>
    <property type="match status" value="1"/>
</dbReference>
<proteinExistence type="inferred from homology"/>
<gene>
    <name evidence="1" type="primary">recO</name>
    <name type="ordered locus">SYNAS_22140</name>
    <name type="ORF">SYN_01535</name>
</gene>
<accession>Q2LVI1</accession>